<dbReference type="EC" id="1.8.-.-" evidence="5"/>
<dbReference type="EMBL" id="AY191249">
    <property type="protein sequence ID" value="AAO38057.1"/>
    <property type="molecule type" value="mRNA"/>
</dbReference>
<dbReference type="RefSeq" id="NP_788267.1">
    <property type="nucleotide sequence ID" value="NM_176078.2"/>
</dbReference>
<dbReference type="SMR" id="Q811Q2"/>
<dbReference type="STRING" id="10116.ENSRNOP00000068644"/>
<dbReference type="iPTMnet" id="Q811Q2"/>
<dbReference type="PhosphoSitePlus" id="Q811Q2"/>
<dbReference type="jPOST" id="Q811Q2"/>
<dbReference type="PaxDb" id="10116-ENSRNOP00000033206"/>
<dbReference type="GeneID" id="304081"/>
<dbReference type="KEGG" id="rno:304081"/>
<dbReference type="UCSC" id="RGD:727938">
    <property type="organism name" value="rat"/>
</dbReference>
<dbReference type="AGR" id="RGD:727938"/>
<dbReference type="CTD" id="54102"/>
<dbReference type="RGD" id="727938">
    <property type="gene designation" value="Clic6"/>
</dbReference>
<dbReference type="eggNOG" id="KOG1422">
    <property type="taxonomic scope" value="Eukaryota"/>
</dbReference>
<dbReference type="InParanoid" id="Q811Q2"/>
<dbReference type="PhylomeDB" id="Q811Q2"/>
<dbReference type="PRO" id="PR:Q811Q2"/>
<dbReference type="Proteomes" id="UP000002494">
    <property type="component" value="Unplaced"/>
</dbReference>
<dbReference type="GO" id="GO:0034707">
    <property type="term" value="C:chloride channel complex"/>
    <property type="evidence" value="ECO:0007669"/>
    <property type="project" value="UniProtKB-KW"/>
</dbReference>
<dbReference type="GO" id="GO:0005737">
    <property type="term" value="C:cytoplasm"/>
    <property type="evidence" value="ECO:0007669"/>
    <property type="project" value="UniProtKB-SubCell"/>
</dbReference>
<dbReference type="GO" id="GO:0005886">
    <property type="term" value="C:plasma membrane"/>
    <property type="evidence" value="ECO:0007669"/>
    <property type="project" value="UniProtKB-SubCell"/>
</dbReference>
<dbReference type="GO" id="GO:0005254">
    <property type="term" value="F:chloride channel activity"/>
    <property type="evidence" value="ECO:0000250"/>
    <property type="project" value="UniProtKB"/>
</dbReference>
<dbReference type="GO" id="GO:0031749">
    <property type="term" value="F:D2 dopamine receptor binding"/>
    <property type="evidence" value="ECO:0000353"/>
    <property type="project" value="RGD"/>
</dbReference>
<dbReference type="GO" id="GO:0031750">
    <property type="term" value="F:D3 dopamine receptor binding"/>
    <property type="evidence" value="ECO:0000353"/>
    <property type="project" value="RGD"/>
</dbReference>
<dbReference type="GO" id="GO:0031751">
    <property type="term" value="F:D4 dopamine receptor binding"/>
    <property type="evidence" value="ECO:0000353"/>
    <property type="project" value="RGD"/>
</dbReference>
<dbReference type="GO" id="GO:0042802">
    <property type="term" value="F:identical protein binding"/>
    <property type="evidence" value="ECO:0000353"/>
    <property type="project" value="RGD"/>
</dbReference>
<dbReference type="GO" id="GO:0016491">
    <property type="term" value="F:oxidoreductase activity"/>
    <property type="evidence" value="ECO:0007669"/>
    <property type="project" value="UniProtKB-KW"/>
</dbReference>
<dbReference type="CDD" id="cd10301">
    <property type="entry name" value="GST_C_CLIC6"/>
    <property type="match status" value="1"/>
</dbReference>
<dbReference type="CDD" id="cd03061">
    <property type="entry name" value="GST_N_CLIC"/>
    <property type="match status" value="1"/>
</dbReference>
<dbReference type="FunFam" id="1.20.1050.10:FF:000001">
    <property type="entry name" value="Chloride intracellular channel 2"/>
    <property type="match status" value="1"/>
</dbReference>
<dbReference type="FunFam" id="3.40.30.10:FF:000021">
    <property type="entry name" value="Chloride intracellular channel 4"/>
    <property type="match status" value="1"/>
</dbReference>
<dbReference type="Gene3D" id="1.20.1050.10">
    <property type="match status" value="1"/>
</dbReference>
<dbReference type="Gene3D" id="3.40.30.10">
    <property type="entry name" value="Glutaredoxin"/>
    <property type="match status" value="1"/>
</dbReference>
<dbReference type="InterPro" id="IPR002946">
    <property type="entry name" value="CLIC"/>
</dbReference>
<dbReference type="InterPro" id="IPR053823">
    <property type="entry name" value="CLIC_N"/>
</dbReference>
<dbReference type="InterPro" id="IPR010987">
    <property type="entry name" value="Glutathione-S-Trfase_C-like"/>
</dbReference>
<dbReference type="InterPro" id="IPR036282">
    <property type="entry name" value="Glutathione-S-Trfase_C_sf"/>
</dbReference>
<dbReference type="InterPro" id="IPR040079">
    <property type="entry name" value="Glutathione_S-Trfase"/>
</dbReference>
<dbReference type="InterPro" id="IPR036249">
    <property type="entry name" value="Thioredoxin-like_sf"/>
</dbReference>
<dbReference type="NCBIfam" id="TIGR00862">
    <property type="entry name" value="O-ClC"/>
    <property type="match status" value="1"/>
</dbReference>
<dbReference type="PANTHER" id="PTHR45476:SF1">
    <property type="entry name" value="CHLORIDE INTRACELLULAR CHANNEL PROTEIN 6"/>
    <property type="match status" value="1"/>
</dbReference>
<dbReference type="PANTHER" id="PTHR45476">
    <property type="entry name" value="CHLORIDE INTRACELLULAR CHANNEL PROTEIN 6-RELATED"/>
    <property type="match status" value="1"/>
</dbReference>
<dbReference type="Pfam" id="PF22441">
    <property type="entry name" value="CLIC-like_N"/>
    <property type="match status" value="1"/>
</dbReference>
<dbReference type="Pfam" id="PF13410">
    <property type="entry name" value="GST_C_2"/>
    <property type="match status" value="1"/>
</dbReference>
<dbReference type="PRINTS" id="PR01263">
    <property type="entry name" value="INTCLCHANNEL"/>
</dbReference>
<dbReference type="SFLD" id="SFLDS00019">
    <property type="entry name" value="Glutathione_Transferase_(cytos"/>
    <property type="match status" value="1"/>
</dbReference>
<dbReference type="SFLD" id="SFLDG00358">
    <property type="entry name" value="Main_(cytGST)"/>
    <property type="match status" value="1"/>
</dbReference>
<dbReference type="SUPFAM" id="SSF47616">
    <property type="entry name" value="GST C-terminal domain-like"/>
    <property type="match status" value="1"/>
</dbReference>
<dbReference type="SUPFAM" id="SSF52833">
    <property type="entry name" value="Thioredoxin-like"/>
    <property type="match status" value="1"/>
</dbReference>
<dbReference type="PROSITE" id="PS50405">
    <property type="entry name" value="GST_CTER"/>
    <property type="match status" value="1"/>
</dbReference>
<name>CLIC6_RAT</name>
<organism>
    <name type="scientific">Rattus norvegicus</name>
    <name type="common">Rat</name>
    <dbReference type="NCBI Taxonomy" id="10116"/>
    <lineage>
        <taxon>Eukaryota</taxon>
        <taxon>Metazoa</taxon>
        <taxon>Chordata</taxon>
        <taxon>Craniata</taxon>
        <taxon>Vertebrata</taxon>
        <taxon>Euteleostomi</taxon>
        <taxon>Mammalia</taxon>
        <taxon>Eutheria</taxon>
        <taxon>Euarchontoglires</taxon>
        <taxon>Glires</taxon>
        <taxon>Rodentia</taxon>
        <taxon>Myomorpha</taxon>
        <taxon>Muroidea</taxon>
        <taxon>Muridae</taxon>
        <taxon>Murinae</taxon>
        <taxon>Rattus</taxon>
    </lineage>
</organism>
<proteinExistence type="evidence at protein level"/>
<reference key="1">
    <citation type="journal article" date="2003" name="Brain Res. Mol. Brain Res.">
        <title>CLIC6, a member of the intracellular chloride channel family, interacts with dopamine D(2)-like receptors.</title>
        <authorList>
            <person name="Griffon N."/>
            <person name="Jeanneteau F."/>
            <person name="Prieur F."/>
            <person name="Diaz J."/>
            <person name="Sokoloff P."/>
        </authorList>
    </citation>
    <scope>NUCLEOTIDE SEQUENCE [MRNA]</scope>
    <scope>SUBCELLULAR LOCATION</scope>
    <scope>TISSUE SPECIFICITY</scope>
    <scope>INTERACTION WITH DRD2; DRD3 AND DRD4</scope>
    <source>
        <strain>Sprague-Dawley</strain>
        <tissue>Brain</tissue>
    </source>
</reference>
<reference key="2">
    <citation type="journal article" date="2012" name="Nat. Commun.">
        <title>Quantitative maps of protein phosphorylation sites across 14 different rat organs and tissues.</title>
        <authorList>
            <person name="Lundby A."/>
            <person name="Secher A."/>
            <person name="Lage K."/>
            <person name="Nordsborg N.B."/>
            <person name="Dmytriyev A."/>
            <person name="Lundby C."/>
            <person name="Olsen J.V."/>
        </authorList>
    </citation>
    <scope>PHOSPHORYLATION [LARGE SCALE ANALYSIS] AT SER-40; SER-264; SER-303; SER-321 AND SER-368</scope>
    <scope>IDENTIFICATION BY MASS SPECTROMETRY [LARGE SCALE ANALYSIS]</scope>
</reference>
<protein>
    <recommendedName>
        <fullName>Chloride intracellular channel protein 6</fullName>
    </recommendedName>
    <alternativeName>
        <fullName>Glutaredoxin-like oxidoreductase CLIC6</fullName>
        <ecNumber evidence="5">1.8.-.-</ecNumber>
    </alternativeName>
</protein>
<comment type="function">
    <text evidence="3 4 5">In the soluble state, catalyzes glutaredoxin-like thiol disulfide exchange reactions with reduced glutathione as electron donor (By similarity). Can insert into membranes and form voltage-dependent chloride-selective channels. The channel opens upon membrane depolarization at positive voltages and closes at negative membrane voltages (By similarity). May play a critical role in water-secreting cells, possibly through the regulation of chloride ion transport (By similarity).</text>
</comment>
<comment type="catalytic activity">
    <reaction evidence="3">
        <text>chloride(in) = chloride(out)</text>
        <dbReference type="Rhea" id="RHEA:29823"/>
        <dbReference type="ChEBI" id="CHEBI:17996"/>
    </reaction>
</comment>
<comment type="activity regulation">
    <text evidence="3">Channel activity is redox- and pH-regulated. Inhibited by IAA-94.</text>
</comment>
<comment type="subunit">
    <text evidence="2 9">Monomer (soluble state) (By similarity). Interacts with dopamine receptors DRD2, DRD3 and DRD4.</text>
</comment>
<comment type="subcellular location">
    <subcellularLocation>
        <location evidence="1">Cytoplasm</location>
    </subcellularLocation>
    <subcellularLocation>
        <location evidence="11">Cell membrane</location>
        <topology evidence="11">Single-pass membrane protein</topology>
    </subcellularLocation>
    <text evidence="1">Predominantly cytoplasmic. Upon chloride ion efflux from the cell, it is translocated to the plasma membrane (By similarity). Colocalizes with DRD3 at the plasma membrane.</text>
</comment>
<comment type="tissue specificity">
    <text evidence="9">Predominantly expressed in brain, pituitary and stomach. In adult brain, it is restricted to the choroid plexus, the striatal proliferative subventricular zone and the cerebellum where it colocalizes with the D(3)R in the Purkinje cells of the lobules IX and X.</text>
</comment>
<comment type="domain">
    <text evidence="5">The active G-site contains a monothiol Cys-X-X-Ser motif which mediates glutathione-dependent redox catalysis.</text>
</comment>
<comment type="domain">
    <text evidence="1 5">Members of this family may change from a globular, soluble state to a state where the N-terminal domain is inserted into the membrane and functions as a chloride channel. The redox status of the active cysteine in Cys-X-X-Cys/Ser motif likely determines the capacity to adopt a soluble or membrane-inserted state. A conformation change of the N-terminal domain is thought to expose hydrophobic surfaces that trigger membrane insertion (By similarity).</text>
</comment>
<comment type="PTM">
    <text evidence="4">Phosphorylated.</text>
</comment>
<comment type="similarity">
    <text evidence="10">Belongs to the chloride channel CLIC family.</text>
</comment>
<evidence type="ECO:0000250" key="1"/>
<evidence type="ECO:0000250" key="2">
    <source>
        <dbReference type="UniProtKB" id="Q8BHB9"/>
    </source>
</evidence>
<evidence type="ECO:0000250" key="3">
    <source>
        <dbReference type="UniProtKB" id="Q96NY7"/>
    </source>
</evidence>
<evidence type="ECO:0000250" key="4">
    <source>
        <dbReference type="UniProtKB" id="Q9N2G5"/>
    </source>
</evidence>
<evidence type="ECO:0000250" key="5">
    <source>
        <dbReference type="UniProtKB" id="Q9Y696"/>
    </source>
</evidence>
<evidence type="ECO:0000255" key="6"/>
<evidence type="ECO:0000255" key="7">
    <source>
        <dbReference type="PROSITE-ProRule" id="PRU00685"/>
    </source>
</evidence>
<evidence type="ECO:0000256" key="8">
    <source>
        <dbReference type="SAM" id="MobiDB-lite"/>
    </source>
</evidence>
<evidence type="ECO:0000269" key="9">
    <source>
    </source>
</evidence>
<evidence type="ECO:0000305" key="10"/>
<evidence type="ECO:0000305" key="11">
    <source>
    </source>
</evidence>
<evidence type="ECO:0007744" key="12">
    <source>
    </source>
</evidence>
<keyword id="KW-1003">Cell membrane</keyword>
<keyword id="KW-0868">Chloride</keyword>
<keyword id="KW-0869">Chloride channel</keyword>
<keyword id="KW-0963">Cytoplasm</keyword>
<keyword id="KW-0407">Ion channel</keyword>
<keyword id="KW-0406">Ion transport</keyword>
<keyword id="KW-0472">Membrane</keyword>
<keyword id="KW-0560">Oxidoreductase</keyword>
<keyword id="KW-0597">Phosphoprotein</keyword>
<keyword id="KW-1185">Reference proteome</keyword>
<keyword id="KW-0677">Repeat</keyword>
<keyword id="KW-0812">Transmembrane</keyword>
<keyword id="KW-1133">Transmembrane helix</keyword>
<keyword id="KW-0813">Transport</keyword>
<keyword id="KW-0851">Voltage-gated channel</keyword>
<sequence length="612" mass="64687">MAEATEPKEVSSGSQGQPEGAVIEGPGEPGAADLEGREASEGAAEAPRDLGEGAEAMASGKEEGGCGQDGEIGEVQAQDPRPGPGTETPGTSGAPGEAEAAECDSEGALIPQSGGGAKRQQVQGTSSGLDAQGEAPEVPEDARREPEDPKASEAGEEAESGQEALGGSAPESQINPEVQGPVGDNMDTEAPAGEPQGSEGEPQGGGESSPQPQDEAIEIAAAEVGGHEPGELAGASAADAKGEGETLRKDGFEEAAPEEARVDSGENGFEEAAPEEARVDSGENRDQGRLQEETGEEEARPESGLKGPCEEAIQEKAPDGSLDGEEAKSTGHEESQVELSNHLAEETSAQGGEELGRVNGRRENGPASEEGDLGQEHDITLFVKAGSDGESIGNCPFSQRLFMILWLKGVIFNVTTVDLKRKPADLQNLAPGTNPPFMTFDGEVKTDVNKIEEFLEEKLVPPRYPKLGTQHPESNSAGNDVFAKFSAFIKNTKKDANDIYEKNLLRALKKLDSYLNSPLPDEIDAYSTEDVTVSQRKFLDGDELTLADCNLLPKLHIIKIVAKKYRGFEFPSEMTGIWRYLNNAYARDEFTNTCPADQEIEHAYSDAAKRMK</sequence>
<feature type="chain" id="PRO_0000144220" description="Chloride intracellular channel protein 6">
    <location>
        <begin position="1"/>
        <end position="612"/>
    </location>
</feature>
<feature type="transmembrane region" description="Helical; Note=After insertion into the membrane" evidence="6">
    <location>
        <begin position="397"/>
        <end position="417"/>
    </location>
</feature>
<feature type="domain" description="GST C-terminal" evidence="7">
    <location>
        <begin position="441"/>
        <end position="612"/>
    </location>
</feature>
<feature type="region of interest" description="Disordered" evidence="8">
    <location>
        <begin position="1"/>
        <end position="373"/>
    </location>
</feature>
<feature type="short sequence motif" description="G-site" evidence="5">
    <location>
        <begin position="395"/>
        <end position="398"/>
    </location>
</feature>
<feature type="compositionally biased region" description="Basic and acidic residues" evidence="8">
    <location>
        <begin position="34"/>
        <end position="51"/>
    </location>
</feature>
<feature type="compositionally biased region" description="Low complexity" evidence="8">
    <location>
        <begin position="84"/>
        <end position="96"/>
    </location>
</feature>
<feature type="compositionally biased region" description="Polar residues" evidence="8">
    <location>
        <begin position="120"/>
        <end position="129"/>
    </location>
</feature>
<feature type="compositionally biased region" description="Basic and acidic residues" evidence="8">
    <location>
        <begin position="140"/>
        <end position="153"/>
    </location>
</feature>
<feature type="compositionally biased region" description="Low complexity" evidence="8">
    <location>
        <begin position="208"/>
        <end position="223"/>
    </location>
</feature>
<feature type="compositionally biased region" description="Basic and acidic residues" evidence="8">
    <location>
        <begin position="240"/>
        <end position="264"/>
    </location>
</feature>
<feature type="compositionally biased region" description="Basic and acidic residues" evidence="8">
    <location>
        <begin position="275"/>
        <end position="303"/>
    </location>
</feature>
<feature type="compositionally biased region" description="Basic and acidic residues" evidence="8">
    <location>
        <begin position="325"/>
        <end position="335"/>
    </location>
</feature>
<feature type="compositionally biased region" description="Basic and acidic residues" evidence="8">
    <location>
        <begin position="354"/>
        <end position="364"/>
    </location>
</feature>
<feature type="modified residue" description="Phosphoserine" evidence="12">
    <location>
        <position position="40"/>
    </location>
</feature>
<feature type="modified residue" description="Phosphoserine" evidence="12">
    <location>
        <position position="264"/>
    </location>
</feature>
<feature type="modified residue" description="Phosphoserine" evidence="12">
    <location>
        <position position="303"/>
    </location>
</feature>
<feature type="modified residue" description="Phosphoserine" evidence="12">
    <location>
        <position position="321"/>
    </location>
</feature>
<feature type="modified residue" description="Phosphoserine" evidence="12">
    <location>
        <position position="368"/>
    </location>
</feature>
<accession>Q811Q2</accession>
<gene>
    <name type="primary">Clic6</name>
    <name type="synonym">Clic6b</name>
</gene>